<feature type="chain" id="PRO_1000045951" description="Nucleoid-associated protein YejK">
    <location>
        <begin position="1"/>
        <end position="335"/>
    </location>
</feature>
<name>NDPA_SHIBS</name>
<evidence type="ECO:0000255" key="1">
    <source>
        <dbReference type="HAMAP-Rule" id="MF_00730"/>
    </source>
</evidence>
<keyword id="KW-0963">Cytoplasm</keyword>
<reference key="1">
    <citation type="journal article" date="2005" name="Nucleic Acids Res.">
        <title>Genome dynamics and diversity of Shigella species, the etiologic agents of bacillary dysentery.</title>
        <authorList>
            <person name="Yang F."/>
            <person name="Yang J."/>
            <person name="Zhang X."/>
            <person name="Chen L."/>
            <person name="Jiang Y."/>
            <person name="Yan Y."/>
            <person name="Tang X."/>
            <person name="Wang J."/>
            <person name="Xiong Z."/>
            <person name="Dong J."/>
            <person name="Xue Y."/>
            <person name="Zhu Y."/>
            <person name="Xu X."/>
            <person name="Sun L."/>
            <person name="Chen S."/>
            <person name="Nie H."/>
            <person name="Peng J."/>
            <person name="Xu J."/>
            <person name="Wang Y."/>
            <person name="Yuan Z."/>
            <person name="Wen Y."/>
            <person name="Yao Z."/>
            <person name="Shen Y."/>
            <person name="Qiang B."/>
            <person name="Hou Y."/>
            <person name="Yu J."/>
            <person name="Jin Q."/>
        </authorList>
    </citation>
    <scope>NUCLEOTIDE SEQUENCE [LARGE SCALE GENOMIC DNA]</scope>
    <source>
        <strain>Sb227</strain>
    </source>
</reference>
<proteinExistence type="inferred from homology"/>
<organism>
    <name type="scientific">Shigella boydii serotype 4 (strain Sb227)</name>
    <dbReference type="NCBI Taxonomy" id="300268"/>
    <lineage>
        <taxon>Bacteria</taxon>
        <taxon>Pseudomonadati</taxon>
        <taxon>Pseudomonadota</taxon>
        <taxon>Gammaproteobacteria</taxon>
        <taxon>Enterobacterales</taxon>
        <taxon>Enterobacteriaceae</taxon>
        <taxon>Shigella</taxon>
    </lineage>
</organism>
<gene>
    <name evidence="1" type="primary">yejK</name>
    <name type="ordered locus">SBO_2138</name>
</gene>
<accession>Q31YZ3</accession>
<sequence>MSLDINQIALHQLIKRDEQNLELVLRDSLLEPTETVVEMVAELHRVYSAKNKAYGLFSEESELAQTLRLQRQGEEDFLAFSRAATGRLRDELAKYPFADGGFVLFCHYRYLAVEYLLVAVLSNLSSMRVNENLDINPTHYLDINHADIVARIDLTEWETNPESTRYLTFLKGRVGRKVADFFMDFLGASEGLNAKAQNRGLLQAVDDFTAEAQLDKAERQNVRQQVYSYCNEQLQAGEEIELESLSKELAGVSEVSFTKFAAEKGYELEESFPADRSTLRQLTKFAGSGGGLTINFDAMLLGERIFWDPATDTLTIKGTPPNLRDQLQRRTSGGN</sequence>
<protein>
    <recommendedName>
        <fullName evidence="1">Nucleoid-associated protein YejK</fullName>
    </recommendedName>
</protein>
<comment type="subcellular location">
    <subcellularLocation>
        <location evidence="1">Cytoplasm</location>
        <location evidence="1">Nucleoid</location>
    </subcellularLocation>
</comment>
<comment type="similarity">
    <text evidence="1">Belongs to the YejK family.</text>
</comment>
<dbReference type="EMBL" id="CP000036">
    <property type="protein sequence ID" value="ABB66715.1"/>
    <property type="molecule type" value="Genomic_DNA"/>
</dbReference>
<dbReference type="RefSeq" id="WP_000050791.1">
    <property type="nucleotide sequence ID" value="NC_007613.1"/>
</dbReference>
<dbReference type="SMR" id="Q31YZ3"/>
<dbReference type="KEGG" id="sbo:SBO_2138"/>
<dbReference type="HOGENOM" id="CLU_063050_0_1_6"/>
<dbReference type="Proteomes" id="UP000007067">
    <property type="component" value="Chromosome"/>
</dbReference>
<dbReference type="GO" id="GO:0043590">
    <property type="term" value="C:bacterial nucleoid"/>
    <property type="evidence" value="ECO:0007669"/>
    <property type="project" value="TreeGrafter"/>
</dbReference>
<dbReference type="GO" id="GO:0005737">
    <property type="term" value="C:cytoplasm"/>
    <property type="evidence" value="ECO:0007669"/>
    <property type="project" value="UniProtKB-UniRule"/>
</dbReference>
<dbReference type="GO" id="GO:0003690">
    <property type="term" value="F:double-stranded DNA binding"/>
    <property type="evidence" value="ECO:0007669"/>
    <property type="project" value="TreeGrafter"/>
</dbReference>
<dbReference type="GO" id="GO:0003727">
    <property type="term" value="F:single-stranded RNA binding"/>
    <property type="evidence" value="ECO:0007669"/>
    <property type="project" value="TreeGrafter"/>
</dbReference>
<dbReference type="HAMAP" id="MF_00730">
    <property type="entry name" value="NdpA"/>
    <property type="match status" value="1"/>
</dbReference>
<dbReference type="InterPro" id="IPR007358">
    <property type="entry name" value="Nucleoid_associated_NdpA"/>
</dbReference>
<dbReference type="NCBIfam" id="NF001557">
    <property type="entry name" value="PRK00378.1"/>
    <property type="match status" value="1"/>
</dbReference>
<dbReference type="PANTHER" id="PTHR38772">
    <property type="match status" value="1"/>
</dbReference>
<dbReference type="PANTHER" id="PTHR38772:SF1">
    <property type="entry name" value="NUCLEOID-ASSOCIATED PROTEIN YEJK"/>
    <property type="match status" value="1"/>
</dbReference>
<dbReference type="Pfam" id="PF04245">
    <property type="entry name" value="NA37"/>
    <property type="match status" value="1"/>
</dbReference>